<feature type="chain" id="PRO_0000384358" description="Mitochondrial distribution and morphology protein 34">
    <location>
        <begin position="1"/>
        <end position="489"/>
    </location>
</feature>
<feature type="domain" description="SMP-LTD" evidence="1">
    <location>
        <begin position="1"/>
        <end position="205"/>
    </location>
</feature>
<gene>
    <name evidence="1" type="primary">MDM34</name>
    <name type="ordered locus">PAS_chr1-4_0499</name>
</gene>
<reference key="1">
    <citation type="journal article" date="2009" name="Nat. Biotechnol.">
        <title>Genome sequence of the recombinant protein production host Pichia pastoris.</title>
        <authorList>
            <person name="De Schutter K."/>
            <person name="Lin Y.-C."/>
            <person name="Tiels P."/>
            <person name="Van Hecke A."/>
            <person name="Glinka S."/>
            <person name="Weber-Lehmann J."/>
            <person name="Rouze P."/>
            <person name="Van de Peer Y."/>
            <person name="Callewaert N."/>
        </authorList>
    </citation>
    <scope>NUCLEOTIDE SEQUENCE [LARGE SCALE GENOMIC DNA]</scope>
    <source>
        <strain>GS115 / ATCC 20864</strain>
    </source>
</reference>
<dbReference type="EMBL" id="FN392319">
    <property type="protein sequence ID" value="CAY68353.1"/>
    <property type="molecule type" value="Genomic_DNA"/>
</dbReference>
<dbReference type="RefSeq" id="XP_002490633.1">
    <property type="nucleotide sequence ID" value="XM_002490588.1"/>
</dbReference>
<dbReference type="SMR" id="C4QYM9"/>
<dbReference type="FunCoup" id="C4QYM9">
    <property type="interactions" value="64"/>
</dbReference>
<dbReference type="STRING" id="644223.C4QYM9"/>
<dbReference type="EnsemblFungi" id="CAY68353">
    <property type="protein sequence ID" value="CAY68353"/>
    <property type="gene ID" value="PAS_chr1-4_0499"/>
</dbReference>
<dbReference type="GeneID" id="8197085"/>
<dbReference type="KEGG" id="ppa:PAS_chr1-4_0499"/>
<dbReference type="eggNOG" id="ENOG502QT3W">
    <property type="taxonomic scope" value="Eukaryota"/>
</dbReference>
<dbReference type="HOGENOM" id="CLU_043692_0_0_1"/>
<dbReference type="InParanoid" id="C4QYM9"/>
<dbReference type="OMA" id="RGIFKFN"/>
<dbReference type="OrthoDB" id="17927at2759"/>
<dbReference type="Proteomes" id="UP000000314">
    <property type="component" value="Chromosome 1"/>
</dbReference>
<dbReference type="GO" id="GO:0032865">
    <property type="term" value="C:ERMES complex"/>
    <property type="evidence" value="ECO:0007669"/>
    <property type="project" value="UniProtKB-UniRule"/>
</dbReference>
<dbReference type="GO" id="GO:0008289">
    <property type="term" value="F:lipid binding"/>
    <property type="evidence" value="ECO:0007669"/>
    <property type="project" value="UniProtKB-KW"/>
</dbReference>
<dbReference type="GO" id="GO:0000002">
    <property type="term" value="P:mitochondrial genome maintenance"/>
    <property type="evidence" value="ECO:0007669"/>
    <property type="project" value="UniProtKB-UniRule"/>
</dbReference>
<dbReference type="GO" id="GO:1990456">
    <property type="term" value="P:mitochondrion-endoplasmic reticulum membrane tethering"/>
    <property type="evidence" value="ECO:0007669"/>
    <property type="project" value="TreeGrafter"/>
</dbReference>
<dbReference type="GO" id="GO:0015914">
    <property type="term" value="P:phospholipid transport"/>
    <property type="evidence" value="ECO:0007669"/>
    <property type="project" value="TreeGrafter"/>
</dbReference>
<dbReference type="CDD" id="cd21673">
    <property type="entry name" value="SMP_Mdm34"/>
    <property type="match status" value="1"/>
</dbReference>
<dbReference type="HAMAP" id="MF_03105">
    <property type="entry name" value="Mdm34"/>
    <property type="match status" value="1"/>
</dbReference>
<dbReference type="InterPro" id="IPR027536">
    <property type="entry name" value="Mdm34"/>
</dbReference>
<dbReference type="InterPro" id="IPR031468">
    <property type="entry name" value="SMP_LBD"/>
</dbReference>
<dbReference type="PANTHER" id="PTHR28185">
    <property type="entry name" value="MITOCHONDRIAL DISTRIBUTION AND MORPHOLOGY PROTEIN 34"/>
    <property type="match status" value="1"/>
</dbReference>
<dbReference type="PANTHER" id="PTHR28185:SF1">
    <property type="entry name" value="MITOCHONDRIAL DISTRIBUTION AND MORPHOLOGY PROTEIN 34"/>
    <property type="match status" value="1"/>
</dbReference>
<dbReference type="PROSITE" id="PS51847">
    <property type="entry name" value="SMP"/>
    <property type="match status" value="1"/>
</dbReference>
<proteinExistence type="inferred from homology"/>
<keyword id="KW-0445">Lipid transport</keyword>
<keyword id="KW-0446">Lipid-binding</keyword>
<keyword id="KW-0472">Membrane</keyword>
<keyword id="KW-0496">Mitochondrion</keyword>
<keyword id="KW-1000">Mitochondrion outer membrane</keyword>
<keyword id="KW-1185">Reference proteome</keyword>
<keyword id="KW-0812">Transmembrane</keyword>
<keyword id="KW-1134">Transmembrane beta strand</keyword>
<keyword id="KW-0813">Transport</keyword>
<name>MDM34_KOMPG</name>
<accession>C4QYM9</accession>
<comment type="function">
    <text evidence="1">Component of the ERMES/MDM complex, which serves as a molecular tether to connect the endoplasmic reticulum (ER) and mitochondria. Components of this complex are involved in the control of mitochondrial shape and protein biogenesis, and function in nonvesicular lipid trafficking between the ER and mitochondria. MDM34 is required for the interaction of the ER-resident membrane protein MMM1 and the outer mitochondrial membrane-resident beta-barrel protein MDM10.</text>
</comment>
<comment type="subunit">
    <text evidence="1">Component of the ER-mitochondria encounter structure (ERMES) or MDM complex, composed of MMM1, MDM10, MDM12 and MDM34.</text>
</comment>
<comment type="subcellular location">
    <subcellularLocation>
        <location evidence="1">Mitochondrion outer membrane</location>
        <topology evidence="1">Multi-pass membrane protein</topology>
    </subcellularLocation>
    <text evidence="1">The ERMES/MDM complex localizes to a few discrete foci (around 10 per single cell), that represent mitochondria-endoplasmic reticulum junctions. These foci are often found next to mtDNA nucleoids.</text>
</comment>
<comment type="domain">
    <text evidence="1">Lacks alpha-helical transmembrane segments, suggesting that it resides in the membrane via beta-sheet conformations similar to those predicted for other outer membrane proteins and porin.</text>
</comment>
<comment type="domain">
    <text evidence="1">The SMP-LTD domain is a barrel-like domain that can bind various types of glycerophospholipids in its interior and mediate their transfer between two adjacent bilayers.</text>
</comment>
<comment type="similarity">
    <text evidence="1">Belongs to the MDM34 family.</text>
</comment>
<evidence type="ECO:0000255" key="1">
    <source>
        <dbReference type="HAMAP-Rule" id="MF_03105"/>
    </source>
</evidence>
<protein>
    <recommendedName>
        <fullName evidence="1">Mitochondrial distribution and morphology protein 34</fullName>
    </recommendedName>
</protein>
<sequence>MSFNINWDSIQKESLSAWTAELLNDALNSGKRPNVLCTDIQIEDLSFGTIPPDFEILEIGDLSSDSFRGIFKFNYDGDASITLRTKVQANPLKIYEDNLLDQFEDDQRELGEFIKPRFVMATDILEIPLNLKLSQIKLSSIIIIVFSRSKGLTLVFKNDPLESISVSSTFDRIKPLARFLQNKIETQISELFKEFLPSVLYKFSQKYTTENFADFHRELLHTQHPERNTENRVTLQDIDPEAPLIISPGSLMRLTTLSSSRQTLTLGGKISADKLNPDIITKNYFNELIPKTYNKFQLKADKVADIAQNIHSIKNLQSRIFWKNSKNNDKPHRRVVCLGDKDKSKEKCKQVESESLYRRSVYSQGSIFNDGASDVSTLTESTEVEQEAPNTEFPKLQAVDLKPDMSVETIIQNSSQEKHRKVKPIDDIGLIGRRKERLRELLKYDVVDFSMPPMPGSPTKFFNTNIFHDSNHINNGNLPIRVAPPPYQC</sequence>
<organism>
    <name type="scientific">Komagataella phaffii (strain GS115 / ATCC 20864)</name>
    <name type="common">Yeast</name>
    <name type="synonym">Pichia pastoris</name>
    <dbReference type="NCBI Taxonomy" id="644223"/>
    <lineage>
        <taxon>Eukaryota</taxon>
        <taxon>Fungi</taxon>
        <taxon>Dikarya</taxon>
        <taxon>Ascomycota</taxon>
        <taxon>Saccharomycotina</taxon>
        <taxon>Pichiomycetes</taxon>
        <taxon>Pichiales</taxon>
        <taxon>Pichiaceae</taxon>
        <taxon>Komagataella</taxon>
    </lineage>
</organism>